<accession>P59765</accession>
<proteinExistence type="uncertain"/>
<dbReference type="EC" id="3.2.1.28" evidence="1"/>
<dbReference type="EMBL" id="AL513382">
    <property type="status" value="NOT_ANNOTATED_CDS"/>
    <property type="molecule type" value="Genomic_DNA"/>
</dbReference>
<dbReference type="EMBL" id="AE014613">
    <property type="status" value="NOT_ANNOTATED_CDS"/>
    <property type="molecule type" value="Genomic_DNA"/>
</dbReference>
<dbReference type="SMR" id="P59765"/>
<dbReference type="OMA" id="RYWDASD"/>
<dbReference type="Proteomes" id="UP000000541">
    <property type="component" value="Chromosome"/>
</dbReference>
<dbReference type="Proteomes" id="UP000002670">
    <property type="component" value="Chromosome"/>
</dbReference>
<dbReference type="GO" id="GO:0042597">
    <property type="term" value="C:periplasmic space"/>
    <property type="evidence" value="ECO:0007669"/>
    <property type="project" value="UniProtKB-SubCell"/>
</dbReference>
<dbReference type="GO" id="GO:0004555">
    <property type="term" value="F:alpha,alpha-trehalase activity"/>
    <property type="evidence" value="ECO:0007669"/>
    <property type="project" value="UniProtKB-UniRule"/>
</dbReference>
<dbReference type="GO" id="GO:0071474">
    <property type="term" value="P:cellular hyperosmotic response"/>
    <property type="evidence" value="ECO:0007669"/>
    <property type="project" value="InterPro"/>
</dbReference>
<dbReference type="GO" id="GO:0005993">
    <property type="term" value="P:trehalose catabolic process"/>
    <property type="evidence" value="ECO:0007669"/>
    <property type="project" value="InterPro"/>
</dbReference>
<dbReference type="FunFam" id="1.50.10.10:FF:000003">
    <property type="entry name" value="Cytoplasmic trehalase"/>
    <property type="match status" value="1"/>
</dbReference>
<dbReference type="Gene3D" id="1.50.10.10">
    <property type="match status" value="1"/>
</dbReference>
<dbReference type="HAMAP" id="MF_01060">
    <property type="entry name" value="Peripl_trehalase"/>
    <property type="match status" value="1"/>
</dbReference>
<dbReference type="InterPro" id="IPR008928">
    <property type="entry name" value="6-hairpin_glycosidase_sf"/>
</dbReference>
<dbReference type="InterPro" id="IPR012341">
    <property type="entry name" value="6hp_glycosidase-like_sf"/>
</dbReference>
<dbReference type="InterPro" id="IPR001661">
    <property type="entry name" value="Glyco_hydro_37"/>
</dbReference>
<dbReference type="InterPro" id="IPR018232">
    <property type="entry name" value="Glyco_hydro_37_CS"/>
</dbReference>
<dbReference type="InterPro" id="IPR023720">
    <property type="entry name" value="Trehalase_periplasmic"/>
</dbReference>
<dbReference type="NCBIfam" id="NF009773">
    <property type="entry name" value="PRK13270.1"/>
    <property type="match status" value="1"/>
</dbReference>
<dbReference type="NCBIfam" id="NF009774">
    <property type="entry name" value="PRK13271.1"/>
    <property type="match status" value="1"/>
</dbReference>
<dbReference type="PANTHER" id="PTHR23403">
    <property type="entry name" value="TREHALASE"/>
    <property type="match status" value="1"/>
</dbReference>
<dbReference type="PANTHER" id="PTHR23403:SF1">
    <property type="entry name" value="TREHALASE"/>
    <property type="match status" value="1"/>
</dbReference>
<dbReference type="Pfam" id="PF01204">
    <property type="entry name" value="Trehalase"/>
    <property type="match status" value="1"/>
</dbReference>
<dbReference type="PRINTS" id="PR00744">
    <property type="entry name" value="GLHYDRLASE37"/>
</dbReference>
<dbReference type="SUPFAM" id="SSF48208">
    <property type="entry name" value="Six-hairpin glycosidases"/>
    <property type="match status" value="1"/>
</dbReference>
<dbReference type="PROSITE" id="PS00927">
    <property type="entry name" value="TREHALASE_1"/>
    <property type="match status" value="1"/>
</dbReference>
<dbReference type="PROSITE" id="PS00928">
    <property type="entry name" value="TREHALASE_2"/>
    <property type="match status" value="1"/>
</dbReference>
<name>TREA_SALTI</name>
<organism>
    <name type="scientific">Salmonella typhi</name>
    <dbReference type="NCBI Taxonomy" id="90370"/>
    <lineage>
        <taxon>Bacteria</taxon>
        <taxon>Pseudomonadati</taxon>
        <taxon>Pseudomonadota</taxon>
        <taxon>Gammaproteobacteria</taxon>
        <taxon>Enterobacterales</taxon>
        <taxon>Enterobacteriaceae</taxon>
        <taxon>Salmonella</taxon>
    </lineage>
</organism>
<keyword id="KW-0326">Glycosidase</keyword>
<keyword id="KW-0378">Hydrolase</keyword>
<keyword id="KW-0574">Periplasm</keyword>
<keyword id="KW-0732">Signal</keyword>
<feature type="signal peptide" evidence="1">
    <location>
        <begin position="1"/>
        <end position="34"/>
    </location>
</feature>
<feature type="chain" id="PRO_0000012046" description="Putative periplasmic trehalase">
    <location>
        <begin position="35"/>
        <end position="570"/>
    </location>
</feature>
<feature type="region of interest" description="Disordered" evidence="2">
    <location>
        <begin position="544"/>
        <end position="570"/>
    </location>
</feature>
<feature type="compositionally biased region" description="Low complexity" evidence="2">
    <location>
        <begin position="554"/>
        <end position="570"/>
    </location>
</feature>
<feature type="active site" description="Proton donor/acceptor" evidence="1">
    <location>
        <position position="319"/>
    </location>
</feature>
<feature type="active site" description="Proton donor/acceptor" evidence="1">
    <location>
        <position position="503"/>
    </location>
</feature>
<feature type="binding site" evidence="1">
    <location>
        <position position="159"/>
    </location>
    <ligand>
        <name>substrate</name>
    </ligand>
</feature>
<feature type="binding site" evidence="1">
    <location>
        <begin position="166"/>
        <end position="167"/>
    </location>
    <ligand>
        <name>substrate</name>
    </ligand>
</feature>
<feature type="binding site" evidence="1">
    <location>
        <position position="203"/>
    </location>
    <ligand>
        <name>substrate</name>
    </ligand>
</feature>
<feature type="binding site" evidence="1">
    <location>
        <begin position="212"/>
        <end position="214"/>
    </location>
    <ligand>
        <name>substrate</name>
    </ligand>
</feature>
<feature type="binding site" evidence="1">
    <location>
        <begin position="284"/>
        <end position="286"/>
    </location>
    <ligand>
        <name>substrate</name>
    </ligand>
</feature>
<feature type="binding site" evidence="1">
    <location>
        <position position="317"/>
    </location>
    <ligand>
        <name>substrate</name>
    </ligand>
</feature>
<feature type="binding site" evidence="1">
    <location>
        <position position="518"/>
    </location>
    <ligand>
        <name>substrate</name>
    </ligand>
</feature>
<protein>
    <recommendedName>
        <fullName>Putative periplasmic trehalase</fullName>
        <ecNumber evidence="1">3.2.1.28</ecNumber>
    </recommendedName>
    <alternativeName>
        <fullName evidence="1">Alpha,alpha-trehalase</fullName>
    </alternativeName>
    <alternativeName>
        <fullName evidence="1">Alpha,alpha-trehalose glucohydrolase</fullName>
    </alternativeName>
</protein>
<evidence type="ECO:0000255" key="1">
    <source>
        <dbReference type="HAMAP-Rule" id="MF_01060"/>
    </source>
</evidence>
<evidence type="ECO:0000256" key="2">
    <source>
        <dbReference type="SAM" id="MobiDB-lite"/>
    </source>
</evidence>
<evidence type="ECO:0000305" key="3"/>
<sequence length="570" mass="63590">MIPPEIRRSVLLQKAIKLALAGTLLTFASFSATAADPSSDTETPQPPDILLGPLFNDVQNAKLFPDQKTFADAIPNSDPLMILADYRMQRNQSGFDLRHFVDVNFTLPKAGEKYVPPAGQSLREHIDGLWPVLTRSTKNVEKWDSLLPLPESYVVPGGRFREIYYWDSYFTMLGLAESGHWDKVADMVANFGYEIDAWGYIPNGNRTYYLSRSQPPFFAFMVELLVQHEGDDALKEYLPQLQKEYAYWMEGVETLQPGQQNQRVVKLEDGSVLNRYWDDRDTPRPESWVEDIATAKSNPSRPATEIYRDLRSAAASGWDFSSRWMDNPQQLSTIRTTTIVPVDLNALLYQLEKTLARASAAAGDRAKASQYDALANARQKAIEMHLWNNKEGWYADYDLQNNKIRDQLTAAALFPLYVNAAAKDRAAKVAAAAQAHLLQPGGLATTSVKSGQQWDAPNGWAPLQWVAAEGLQNYGQDDVAMEVTWRFLTNVQHTYDREKKLVEKYDVSSTGTGGGGGEYPLQDGFGWSNGVTLKMLDLICPQEKPCDSVPSTRPASLSATPTKTPSAATQ</sequence>
<gene>
    <name evidence="1" type="primary">treA</name>
    <name type="ordered locus">STY1924</name>
    <name type="ordered locus">t1080</name>
</gene>
<comment type="function">
    <text evidence="1">Provides the cells with the ability to utilize trehalose at high osmolarity by splitting it into glucose molecules that can subsequently be taken up by the phosphotransferase-mediated uptake system.</text>
</comment>
<comment type="catalytic activity">
    <reaction evidence="1">
        <text>alpha,alpha-trehalose + H2O = alpha-D-glucose + beta-D-glucose</text>
        <dbReference type="Rhea" id="RHEA:32675"/>
        <dbReference type="ChEBI" id="CHEBI:15377"/>
        <dbReference type="ChEBI" id="CHEBI:15903"/>
        <dbReference type="ChEBI" id="CHEBI:16551"/>
        <dbReference type="ChEBI" id="CHEBI:17925"/>
        <dbReference type="EC" id="3.2.1.28"/>
    </reaction>
</comment>
<comment type="subunit">
    <text evidence="1">Monomer.</text>
</comment>
<comment type="subcellular location">
    <subcellularLocation>
        <location evidence="1">Periplasm</location>
    </subcellularLocation>
</comment>
<comment type="similarity">
    <text evidence="1">Belongs to the glycosyl hydrolase 37 family.</text>
</comment>
<comment type="caution">
    <text evidence="3">Could be the product of a pseudogene. The sequence has been verified by the authors and is believed to be correct.</text>
</comment>
<comment type="sequence caution" evidence="3">
    <conflict type="erroneous termination">
        <sequence resource="EMBL" id="AE014613"/>
    </conflict>
    <text>Truncated C-terminus.</text>
</comment>
<comment type="sequence caution" evidence="3">
    <conflict type="erroneous termination">
        <sequence resource="EMBL" id="AL513382"/>
    </conflict>
    <text>Truncated C-terminus.</text>
</comment>
<reference key="1">
    <citation type="journal article" date="2001" name="Nature">
        <title>Complete genome sequence of a multiple drug resistant Salmonella enterica serovar Typhi CT18.</title>
        <authorList>
            <person name="Parkhill J."/>
            <person name="Dougan G."/>
            <person name="James K.D."/>
            <person name="Thomson N.R."/>
            <person name="Pickard D."/>
            <person name="Wain J."/>
            <person name="Churcher C.M."/>
            <person name="Mungall K.L."/>
            <person name="Bentley S.D."/>
            <person name="Holden M.T.G."/>
            <person name="Sebaihia M."/>
            <person name="Baker S."/>
            <person name="Basham D."/>
            <person name="Brooks K."/>
            <person name="Chillingworth T."/>
            <person name="Connerton P."/>
            <person name="Cronin A."/>
            <person name="Davis P."/>
            <person name="Davies R.M."/>
            <person name="Dowd L."/>
            <person name="White N."/>
            <person name="Farrar J."/>
            <person name="Feltwell T."/>
            <person name="Hamlin N."/>
            <person name="Haque A."/>
            <person name="Hien T.T."/>
            <person name="Holroyd S."/>
            <person name="Jagels K."/>
            <person name="Krogh A."/>
            <person name="Larsen T.S."/>
            <person name="Leather S."/>
            <person name="Moule S."/>
            <person name="O'Gaora P."/>
            <person name="Parry C."/>
            <person name="Quail M.A."/>
            <person name="Rutherford K.M."/>
            <person name="Simmonds M."/>
            <person name="Skelton J."/>
            <person name="Stevens K."/>
            <person name="Whitehead S."/>
            <person name="Barrell B.G."/>
        </authorList>
    </citation>
    <scope>NUCLEOTIDE SEQUENCE [LARGE SCALE GENOMIC DNA]</scope>
    <source>
        <strain>CT18</strain>
    </source>
</reference>
<reference key="2">
    <citation type="journal article" date="2003" name="J. Bacteriol.">
        <title>Comparative genomics of Salmonella enterica serovar Typhi strains Ty2 and CT18.</title>
        <authorList>
            <person name="Deng W."/>
            <person name="Liou S.-R."/>
            <person name="Plunkett G. III"/>
            <person name="Mayhew G.F."/>
            <person name="Rose D.J."/>
            <person name="Burland V."/>
            <person name="Kodoyianni V."/>
            <person name="Schwartz D.C."/>
            <person name="Blattner F.R."/>
        </authorList>
    </citation>
    <scope>NUCLEOTIDE SEQUENCE [LARGE SCALE GENOMIC DNA]</scope>
    <source>
        <strain>ATCC 700931 / Ty2</strain>
    </source>
</reference>